<proteinExistence type="evidence at protein level"/>
<name>ECCB5_MYCMM</name>
<comment type="function">
    <text evidence="1 3 4">An ATPase (By similarity). Part of the ESX-5 specialized secretion system, which is responsible for the secretion of EsxN and a number of PE_PGRS and PPE proteins.</text>
</comment>
<comment type="subunit">
    <text evidence="4">Part of the ESX-5 / type VII secretion system (T7SS), which is composed of cytosolic and membrane components. The ESX-5 membrane complex is composed of EccB5, EccC5, EccD5 and EccE5.</text>
</comment>
<comment type="subcellular location">
    <subcellularLocation>
        <location evidence="4">Cell inner membrane</location>
        <topology evidence="2">Single-pass membrane protein</topology>
    </subcellularLocation>
</comment>
<comment type="similarity">
    <text evidence="6">Belongs to the EccB family.</text>
</comment>
<sequence length="507" mass="54103">MAEQGRGQRGSGYGLGLSTRTQVTGYQFLARRTAMALTRWRVRMEIEPGRRQTLAVVASVSAALVICLGSLLWSFISPSGQINDSPIIADRDSGALYVRVGDRLYPALNLASARLITGRASNPHLVRGSQIDSMPHGPLVGIPGAPSDFNPASPATSSWLVCDTVAGPSTMPQSPHGVTVTVIDGTPDLTGHRRVLKGSDAVVLRYGGDAWVIREGRRSRIDATDRSVLLPLGLTPEQVTQARPMSHALYDALPVGPELVVPEVPDDGAAATFPGAPGPVGTVIVTPQISGPQQYSLVLTDGVQTLPPLVAQILQNAGRPGNTKPVTVQPSSLAKMPVVNRLDLSAYPDDPLNVMDIRDNPSTCWWWERTAGENRSRVQVISGPNIPVAPHEMNKVVDLVKADMSGREADQVYFGPNFANFVAVTGNNPAAQTTESLWWLTEAGARFGVEDTKEAREALGLGLTPSPAPWVVLRLLPQGPTLSRADALVEHDTLPMDMSPAELVVPK</sequence>
<evidence type="ECO:0000250" key="1">
    <source>
        <dbReference type="UniProtKB" id="P9WNQ9"/>
    </source>
</evidence>
<evidence type="ECO:0000255" key="2"/>
<evidence type="ECO:0000269" key="3">
    <source>
    </source>
</evidence>
<evidence type="ECO:0000269" key="4">
    <source>
    </source>
</evidence>
<evidence type="ECO:0000303" key="5">
    <source>
    </source>
</evidence>
<evidence type="ECO:0000305" key="6"/>
<evidence type="ECO:0000312" key="7">
    <source>
        <dbReference type="EMBL" id="ACC41107.1"/>
    </source>
</evidence>
<accession>B2HST3</accession>
<reference key="1">
    <citation type="journal article" date="2008" name="Genome Res.">
        <title>Insights from the complete genome sequence of Mycobacterium marinum on the evolution of Mycobacterium tuberculosis.</title>
        <authorList>
            <person name="Stinear T.P."/>
            <person name="Seemann T."/>
            <person name="Harrison P.F."/>
            <person name="Jenkin G.A."/>
            <person name="Davies J.K."/>
            <person name="Johnson P.D."/>
            <person name="Abdellah Z."/>
            <person name="Arrowsmith C."/>
            <person name="Chillingworth T."/>
            <person name="Churcher C."/>
            <person name="Clarke K."/>
            <person name="Cronin A."/>
            <person name="Davis P."/>
            <person name="Goodhead I."/>
            <person name="Holroyd N."/>
            <person name="Jagels K."/>
            <person name="Lord A."/>
            <person name="Moule S."/>
            <person name="Mungall K."/>
            <person name="Norbertczak H."/>
            <person name="Quail M.A."/>
            <person name="Rabbinowitsch E."/>
            <person name="Walker D."/>
            <person name="White B."/>
            <person name="Whitehead S."/>
            <person name="Small P.L."/>
            <person name="Brosch R."/>
            <person name="Ramakrishnan L."/>
            <person name="Fischbach M.A."/>
            <person name="Parkhill J."/>
            <person name="Cole S.T."/>
        </authorList>
    </citation>
    <scope>NUCLEOTIDE SEQUENCE [LARGE SCALE GENOMIC DNA]</scope>
    <source>
        <strain>ATCC BAA-535 / M</strain>
    </source>
</reference>
<reference key="2">
    <citation type="journal article" date="2009" name="Mol. Microbiol.">
        <title>PPE and PE_PGRS proteins of Mycobacterium marinum are transported via the type VII secretion system ESX-5.</title>
        <authorList>
            <person name="Abdallah A.M."/>
            <person name="Verboom T."/>
            <person name="Weerdenburg E.M."/>
            <person name="Gey van Pittius N.C."/>
            <person name="Mahasha P.W."/>
            <person name="Jimenez C."/>
            <person name="Parra M."/>
            <person name="Cadieux N."/>
            <person name="Brennan M.J."/>
            <person name="Appelmelk B.J."/>
            <person name="Bitter W."/>
        </authorList>
    </citation>
    <scope>FUNCTION</scope>
</reference>
<reference key="3">
    <citation type="journal article" date="2012" name="Mol. Microbiol.">
        <title>Composition of the type VII secretion system membrane complex.</title>
        <authorList>
            <person name="Houben E.N."/>
            <person name="Bestebroer J."/>
            <person name="Ummels R."/>
            <person name="Wilson L."/>
            <person name="Piersma S.R."/>
            <person name="Jimenez C.R."/>
            <person name="Ottenhoff T.H."/>
            <person name="Luirink J."/>
            <person name="Bitter W."/>
        </authorList>
    </citation>
    <scope>FUNCTION</scope>
    <scope>SUBUNIT</scope>
    <scope>SUBCELLULAR LOCATION</scope>
    <source>
        <strain>ATCC BAA-535 / M</strain>
    </source>
</reference>
<gene>
    <name evidence="5" type="primary">eccB5</name>
    <name evidence="7" type="ordered locus">MMAR_2664</name>
</gene>
<keyword id="KW-0067">ATP-binding</keyword>
<keyword id="KW-0997">Cell inner membrane</keyword>
<keyword id="KW-1003">Cell membrane</keyword>
<keyword id="KW-0378">Hydrolase</keyword>
<keyword id="KW-0472">Membrane</keyword>
<keyword id="KW-0547">Nucleotide-binding</keyword>
<keyword id="KW-1185">Reference proteome</keyword>
<keyword id="KW-0812">Transmembrane</keyword>
<keyword id="KW-1133">Transmembrane helix</keyword>
<keyword id="KW-0813">Transport</keyword>
<protein>
    <recommendedName>
        <fullName evidence="6">ESX-5 secretion system ATPase EccB5</fullName>
        <ecNumber evidence="6">3.6.-.-</ecNumber>
    </recommendedName>
    <alternativeName>
        <fullName evidence="6">ESX conserved component B5</fullName>
    </alternativeName>
    <alternativeName>
        <fullName evidence="6">Type VII secretion system protein EccB5</fullName>
        <shortName evidence="6">T7SS protein EccB5</shortName>
    </alternativeName>
</protein>
<feature type="chain" id="PRO_0000434749" description="ESX-5 secretion system ATPase EccB5">
    <location>
        <begin position="1"/>
        <end position="507"/>
    </location>
</feature>
<feature type="transmembrane region" description="Helical" evidence="2">
    <location>
        <begin position="56"/>
        <end position="76"/>
    </location>
</feature>
<organism>
    <name type="scientific">Mycobacterium marinum (strain ATCC BAA-535 / M)</name>
    <dbReference type="NCBI Taxonomy" id="216594"/>
    <lineage>
        <taxon>Bacteria</taxon>
        <taxon>Bacillati</taxon>
        <taxon>Actinomycetota</taxon>
        <taxon>Actinomycetes</taxon>
        <taxon>Mycobacteriales</taxon>
        <taxon>Mycobacteriaceae</taxon>
        <taxon>Mycobacterium</taxon>
        <taxon>Mycobacterium ulcerans group</taxon>
    </lineage>
</organism>
<dbReference type="EC" id="3.6.-.-" evidence="6"/>
<dbReference type="EMBL" id="CP000854">
    <property type="protein sequence ID" value="ACC41107.1"/>
    <property type="molecule type" value="Genomic_DNA"/>
</dbReference>
<dbReference type="RefSeq" id="WP_012394381.1">
    <property type="nucleotide sequence ID" value="NC_010612.1"/>
</dbReference>
<dbReference type="SMR" id="B2HST3"/>
<dbReference type="STRING" id="216594.MMAR_2664"/>
<dbReference type="KEGG" id="mmi:MMAR_2664"/>
<dbReference type="eggNOG" id="COG3266">
    <property type="taxonomic scope" value="Bacteria"/>
</dbReference>
<dbReference type="HOGENOM" id="CLU_036302_3_0_11"/>
<dbReference type="OrthoDB" id="3847604at2"/>
<dbReference type="Proteomes" id="UP000001190">
    <property type="component" value="Chromosome"/>
</dbReference>
<dbReference type="GO" id="GO:0005576">
    <property type="term" value="C:extracellular region"/>
    <property type="evidence" value="ECO:0007669"/>
    <property type="project" value="TreeGrafter"/>
</dbReference>
<dbReference type="GO" id="GO:0005886">
    <property type="term" value="C:plasma membrane"/>
    <property type="evidence" value="ECO:0007669"/>
    <property type="project" value="UniProtKB-SubCell"/>
</dbReference>
<dbReference type="GO" id="GO:0005524">
    <property type="term" value="F:ATP binding"/>
    <property type="evidence" value="ECO:0007669"/>
    <property type="project" value="UniProtKB-KW"/>
</dbReference>
<dbReference type="GO" id="GO:0016787">
    <property type="term" value="F:hydrolase activity"/>
    <property type="evidence" value="ECO:0007669"/>
    <property type="project" value="UniProtKB-KW"/>
</dbReference>
<dbReference type="FunFam" id="3.30.2390.20:FF:000001">
    <property type="entry name" value="ESX-1 secretion system ATPase EccB1"/>
    <property type="match status" value="1"/>
</dbReference>
<dbReference type="Gene3D" id="3.30.2390.20">
    <property type="entry name" value="Type VII secretion system EccB, repeat 1 domain"/>
    <property type="match status" value="1"/>
</dbReference>
<dbReference type="Gene3D" id="2.40.50.910">
    <property type="entry name" value="Type VII secretion system EccB, repeat 3 domain"/>
    <property type="match status" value="1"/>
</dbReference>
<dbReference type="InterPro" id="IPR007795">
    <property type="entry name" value="T7SS_EccB"/>
</dbReference>
<dbReference type="InterPro" id="IPR044857">
    <property type="entry name" value="T7SS_EccB_R1"/>
</dbReference>
<dbReference type="InterPro" id="IPR042485">
    <property type="entry name" value="T7SS_EccB_R3"/>
</dbReference>
<dbReference type="NCBIfam" id="TIGR03919">
    <property type="entry name" value="T7SS_EccB"/>
    <property type="match status" value="1"/>
</dbReference>
<dbReference type="PANTHER" id="PTHR40765">
    <property type="entry name" value="ESX-2 SECRETION SYSTEM ATPASE ECCB2"/>
    <property type="match status" value="1"/>
</dbReference>
<dbReference type="PANTHER" id="PTHR40765:SF2">
    <property type="entry name" value="ESX-2 SECRETION SYSTEM ATPASE ECCB2"/>
    <property type="match status" value="1"/>
</dbReference>
<dbReference type="Pfam" id="PF05108">
    <property type="entry name" value="T7SS_ESX1_EccB"/>
    <property type="match status" value="1"/>
</dbReference>